<accession>Q2KIK0</accession>
<organism>
    <name type="scientific">Bos taurus</name>
    <name type="common">Bovine</name>
    <dbReference type="NCBI Taxonomy" id="9913"/>
    <lineage>
        <taxon>Eukaryota</taxon>
        <taxon>Metazoa</taxon>
        <taxon>Chordata</taxon>
        <taxon>Craniata</taxon>
        <taxon>Vertebrata</taxon>
        <taxon>Euteleostomi</taxon>
        <taxon>Mammalia</taxon>
        <taxon>Eutheria</taxon>
        <taxon>Laurasiatheria</taxon>
        <taxon>Artiodactyla</taxon>
        <taxon>Ruminantia</taxon>
        <taxon>Pecora</taxon>
        <taxon>Bovidae</taxon>
        <taxon>Bovinae</taxon>
        <taxon>Bos</taxon>
    </lineage>
</organism>
<comment type="function">
    <text>May play a role in ubiquitination and subsequent proteasomal degradation of target proteins.</text>
</comment>
<comment type="subunit">
    <text evidence="1">Probably associates with SCF (SKP1-CUL1-F-box protein) complex through interaction with SKP1. Interacts with S100A6. Interacts with HSP90 (By similarity).</text>
</comment>
<comment type="subcellular location">
    <subcellularLocation>
        <location evidence="1">Cytoplasm</location>
    </subcellularLocation>
    <subcellularLocation>
        <location evidence="1">Nucleus</location>
    </subcellularLocation>
    <text evidence="1">Translocates to the nucleus upon heat shock, requiring S100A6.</text>
</comment>
<comment type="domain">
    <text evidence="1">The CS domain mediates interaction with HSP90.</text>
</comment>
<comment type="PTM">
    <text evidence="1">Phosphorylated at Ser-254 and Ser-304, dephosphorylation promotes nuclear translocation, most likely due to disruption of the SUGT1-HSP90 complex.</text>
</comment>
<comment type="similarity">
    <text evidence="6">Belongs to the SGT1 family.</text>
</comment>
<proteinExistence type="evidence at transcript level"/>
<keyword id="KW-0007">Acetylation</keyword>
<keyword id="KW-0963">Cytoplasm</keyword>
<keyword id="KW-1017">Isopeptide bond</keyword>
<keyword id="KW-0539">Nucleus</keyword>
<keyword id="KW-0597">Phosphoprotein</keyword>
<keyword id="KW-1185">Reference proteome</keyword>
<keyword id="KW-0677">Repeat</keyword>
<keyword id="KW-0802">TPR repeat</keyword>
<keyword id="KW-0832">Ubl conjugation</keyword>
<keyword id="KW-0833">Ubl conjugation pathway</keyword>
<feature type="initiator methionine" description="Removed" evidence="3">
    <location>
        <position position="1"/>
    </location>
</feature>
<feature type="chain" id="PRO_0000330901" description="Protein SGT1 homolog" evidence="1">
    <location>
        <begin position="2"/>
        <end position="338"/>
    </location>
</feature>
<feature type="repeat" description="TPR 1">
    <location>
        <begin position="11"/>
        <end position="45"/>
    </location>
</feature>
<feature type="repeat" description="TPR 2">
    <location>
        <begin position="46"/>
        <end position="79"/>
    </location>
</feature>
<feature type="repeat" description="TPR 3">
    <location>
        <begin position="80"/>
        <end position="113"/>
    </location>
</feature>
<feature type="domain" description="CS" evidence="5">
    <location>
        <begin position="142"/>
        <end position="231"/>
    </location>
</feature>
<feature type="domain" description="SGS" evidence="4">
    <location>
        <begin position="249"/>
        <end position="338"/>
    </location>
</feature>
<feature type="modified residue" description="N-acetylalanine" evidence="3">
    <location>
        <position position="2"/>
    </location>
</feature>
<feature type="modified residue" description="Phosphoserine" evidence="3">
    <location>
        <position position="254"/>
    </location>
</feature>
<feature type="modified residue" description="Phosphothreonine" evidence="3">
    <location>
        <position position="257"/>
    </location>
</feature>
<feature type="modified residue" description="Phosphoserine" evidence="3">
    <location>
        <position position="304"/>
    </location>
</feature>
<feature type="cross-link" description="Glycyl lysine isopeptide (Lys-Gly) (interchain with G-Cter in SUMO1); alternate" evidence="3">
    <location>
        <position position="268"/>
    </location>
</feature>
<feature type="cross-link" description="Glycyl lysine isopeptide (Lys-Gly) (interchain with G-Cter in SUMO2); alternate" evidence="3">
    <location>
        <position position="268"/>
    </location>
</feature>
<evidence type="ECO:0000250" key="1"/>
<evidence type="ECO:0000250" key="2">
    <source>
        <dbReference type="UniProtKB" id="Q08446"/>
    </source>
</evidence>
<evidence type="ECO:0000250" key="3">
    <source>
        <dbReference type="UniProtKB" id="Q9Y2Z0"/>
    </source>
</evidence>
<evidence type="ECO:0000255" key="4">
    <source>
        <dbReference type="PROSITE-ProRule" id="PRU00386"/>
    </source>
</evidence>
<evidence type="ECO:0000255" key="5">
    <source>
        <dbReference type="PROSITE-ProRule" id="PRU00547"/>
    </source>
</evidence>
<evidence type="ECO:0000305" key="6"/>
<gene>
    <name evidence="3" type="primary">SUGT1</name>
</gene>
<sequence>MAAAAAGPVAAASRLFRSFSDALIEQDPQAALEELTKALEQKPDDAPYYCQRAYCHILLGNYSDAVADAKKSLELNPNSSTALLRKGICEYHEKNYAAALETFTEGQKLNSADADLTAWIKRCQEAQNGSQPEVSASQRTHQSKIKYDWYQTESQVIITLMIKNVQKNDVNVEFSEKELSALVKLPSGDDYSLKLRLLHPIIPEQSTFKVLSTKIEIKMKKPEAVRWEKLEGQGDVPNPKPFIADVKNLYPSSSHYTRNWDKLVGEIKEEEKNEKLEGDAALNKLFQQIYSDGSDEVKRAMNKSFMESGGTVLSTNWSDVGKRKVEINPPDDMEWKKY</sequence>
<protein>
    <recommendedName>
        <fullName evidence="2">Protein SGT1 homolog</fullName>
    </recommendedName>
    <alternativeName>
        <fullName evidence="2">Suppressor of G2 allele of SKP1 homolog</fullName>
    </alternativeName>
</protein>
<dbReference type="EMBL" id="BC112610">
    <property type="protein sequence ID" value="AAI12611.1"/>
    <property type="molecule type" value="mRNA"/>
</dbReference>
<dbReference type="RefSeq" id="NP_001039668.1">
    <property type="nucleotide sequence ID" value="NM_001046203.2"/>
</dbReference>
<dbReference type="SMR" id="Q2KIK0"/>
<dbReference type="FunCoup" id="Q2KIK0">
    <property type="interactions" value="4120"/>
</dbReference>
<dbReference type="STRING" id="9913.ENSBTAP00000002770"/>
<dbReference type="GeneID" id="515509"/>
<dbReference type="KEGG" id="bta:515509"/>
<dbReference type="CTD" id="10910"/>
<dbReference type="VEuPathDB" id="HostDB:ENSBTAG00000002137"/>
<dbReference type="HOGENOM" id="CLU_039532_1_1_1"/>
<dbReference type="InParanoid" id="Q2KIK0"/>
<dbReference type="OMA" id="WIKKCEE"/>
<dbReference type="OrthoDB" id="1898560at2759"/>
<dbReference type="Reactome" id="R-BTA-844456">
    <property type="pathway name" value="The NLRP3 inflammasome"/>
</dbReference>
<dbReference type="Proteomes" id="UP000009136">
    <property type="component" value="Chromosome 12"/>
</dbReference>
<dbReference type="Bgee" id="ENSBTAG00000002137">
    <property type="expression patterns" value="Expressed in oocyte and 105 other cell types or tissues"/>
</dbReference>
<dbReference type="GO" id="GO:0005737">
    <property type="term" value="C:cytoplasm"/>
    <property type="evidence" value="ECO:0007669"/>
    <property type="project" value="UniProtKB-SubCell"/>
</dbReference>
<dbReference type="GO" id="GO:0005634">
    <property type="term" value="C:nucleus"/>
    <property type="evidence" value="ECO:0007669"/>
    <property type="project" value="UniProtKB-SubCell"/>
</dbReference>
<dbReference type="GO" id="GO:0051087">
    <property type="term" value="F:protein-folding chaperone binding"/>
    <property type="evidence" value="ECO:0007669"/>
    <property type="project" value="InterPro"/>
</dbReference>
<dbReference type="GO" id="GO:0051382">
    <property type="term" value="P:kinetochore assembly"/>
    <property type="evidence" value="ECO:0000250"/>
    <property type="project" value="UniProtKB"/>
</dbReference>
<dbReference type="CDD" id="cd06489">
    <property type="entry name" value="p23_CS_hSgt1_like"/>
    <property type="match status" value="1"/>
</dbReference>
<dbReference type="FunFam" id="1.25.40.10:FF:000244">
    <property type="entry name" value="SGT1 homolog, MIS12 kinetochore complex assembly cochaperone"/>
    <property type="match status" value="1"/>
</dbReference>
<dbReference type="FunFam" id="2.60.40.790:FF:000012">
    <property type="entry name" value="SGT1 homolog, MIS12 kinetochore complex assembly cochaperone"/>
    <property type="match status" value="1"/>
</dbReference>
<dbReference type="Gene3D" id="2.60.40.790">
    <property type="match status" value="1"/>
</dbReference>
<dbReference type="Gene3D" id="1.25.40.10">
    <property type="entry name" value="Tetratricopeptide repeat domain"/>
    <property type="match status" value="1"/>
</dbReference>
<dbReference type="InterPro" id="IPR007052">
    <property type="entry name" value="CS_dom"/>
</dbReference>
<dbReference type="InterPro" id="IPR008978">
    <property type="entry name" value="HSP20-like_chaperone"/>
</dbReference>
<dbReference type="InterPro" id="IPR007699">
    <property type="entry name" value="SGS_dom"/>
</dbReference>
<dbReference type="InterPro" id="IPR044563">
    <property type="entry name" value="Sgt1-like"/>
</dbReference>
<dbReference type="InterPro" id="IPR011990">
    <property type="entry name" value="TPR-like_helical_dom_sf"/>
</dbReference>
<dbReference type="InterPro" id="IPR019734">
    <property type="entry name" value="TPR_rpt"/>
</dbReference>
<dbReference type="PANTHER" id="PTHR45862">
    <property type="entry name" value="PROTEIN SGT1 HOMOLOG"/>
    <property type="match status" value="1"/>
</dbReference>
<dbReference type="Pfam" id="PF04969">
    <property type="entry name" value="CS"/>
    <property type="match status" value="1"/>
</dbReference>
<dbReference type="Pfam" id="PF05002">
    <property type="entry name" value="SGS"/>
    <property type="match status" value="1"/>
</dbReference>
<dbReference type="Pfam" id="PF00515">
    <property type="entry name" value="TPR_1"/>
    <property type="match status" value="1"/>
</dbReference>
<dbReference type="SMART" id="SM00028">
    <property type="entry name" value="TPR"/>
    <property type="match status" value="2"/>
</dbReference>
<dbReference type="SUPFAM" id="SSF49764">
    <property type="entry name" value="HSP20-like chaperones"/>
    <property type="match status" value="1"/>
</dbReference>
<dbReference type="SUPFAM" id="SSF48452">
    <property type="entry name" value="TPR-like"/>
    <property type="match status" value="1"/>
</dbReference>
<dbReference type="PROSITE" id="PS51203">
    <property type="entry name" value="CS"/>
    <property type="match status" value="1"/>
</dbReference>
<dbReference type="PROSITE" id="PS51048">
    <property type="entry name" value="SGS"/>
    <property type="match status" value="1"/>
</dbReference>
<dbReference type="PROSITE" id="PS50005">
    <property type="entry name" value="TPR"/>
    <property type="match status" value="3"/>
</dbReference>
<dbReference type="PROSITE" id="PS50293">
    <property type="entry name" value="TPR_REGION"/>
    <property type="match status" value="1"/>
</dbReference>
<reference key="1">
    <citation type="submission" date="2006-01" db="EMBL/GenBank/DDBJ databases">
        <authorList>
            <consortium name="NIH - Mammalian Gene Collection (MGC) project"/>
        </authorList>
    </citation>
    <scope>NUCLEOTIDE SEQUENCE [LARGE SCALE MRNA]</scope>
    <source>
        <strain>Hereford</strain>
        <tissue>Testis</tissue>
    </source>
</reference>
<name>SGT1_BOVIN</name>